<dbReference type="EMBL" id="U40631">
    <property type="protein sequence ID" value="AAC48514.1"/>
    <property type="molecule type" value="mRNA"/>
</dbReference>
<dbReference type="RefSeq" id="NP_001075835.1">
    <property type="nucleotide sequence ID" value="NM_001082366.1"/>
</dbReference>
<dbReference type="STRING" id="9986.ENSOCUP00000032441"/>
<dbReference type="GeneID" id="100009219"/>
<dbReference type="KEGG" id="ocu:100009219"/>
<dbReference type="CTD" id="6707"/>
<dbReference type="InParanoid" id="Q28658"/>
<dbReference type="OrthoDB" id="9623740at2759"/>
<dbReference type="Proteomes" id="UP000001811">
    <property type="component" value="Unplaced"/>
</dbReference>
<dbReference type="GO" id="GO:0005737">
    <property type="term" value="C:cytoplasm"/>
    <property type="evidence" value="ECO:0007669"/>
    <property type="project" value="UniProtKB-SubCell"/>
</dbReference>
<dbReference type="GO" id="GO:0031424">
    <property type="term" value="P:keratinization"/>
    <property type="evidence" value="ECO:0007669"/>
    <property type="project" value="UniProtKB-KW"/>
</dbReference>
<dbReference type="Pfam" id="PF02389">
    <property type="entry name" value="Cornifin"/>
    <property type="match status" value="2"/>
</dbReference>
<dbReference type="PRINTS" id="PR00021">
    <property type="entry name" value="PRORICH"/>
</dbReference>
<sequence>MSSYQQKQPFTPPPQPQQHQVKQPCQPPPQDTFVPITKDPCHPNVPSPGNTNIAEQGYVKIPEQGSIKVPDTGYTKIPDSGNTKVPESGCTSVPGSGYSVVPQPGYTKVPDQGYTKVPESGCTSVPGSGYSVVPQPGYTKVPESGCTSVPGPGYPTVPQPGYTKVPESGCTSVPGSGYSVIPQPSYTKVPESGCTSVPGPGYPTVPQPGYTKVQEPNPSIVTPGLSQKKTK</sequence>
<name>SPRR3_RABIT</name>
<comment type="function">
    <text>Can serve as a substrate in transglutaminase-catalyzed cross linking reactions and can function as a cross-linked envelope precursor.</text>
</comment>
<comment type="subcellular location">
    <subcellularLocation>
        <location>Cytoplasm</location>
    </subcellularLocation>
</comment>
<comment type="tissue specificity">
    <text>Suprabasal layers of the squamous epithelia of esophagus, tongue and oral mucosa.</text>
</comment>
<comment type="induction">
    <text>Suppressed by retinoic acid. RAR-selective retinoid is more effective than RXR-selective retinoid.</text>
</comment>
<comment type="similarity">
    <text evidence="3">Belongs to the cornifin (SPRR) family.</text>
</comment>
<proteinExistence type="evidence at transcript level"/>
<accession>Q28658</accession>
<reference key="1">
    <citation type="journal article" date="1996" name="J. Biol. Chem.">
        <title>Cloning and regulation of cornifin beta, a new member of the cornifin/spr family. Suppression by retinoic acid receptor-selective retinoids.</title>
        <authorList>
            <person name="Austin S.J."/>
            <person name="Fujimoto W."/>
            <person name="Marvin K.W."/>
            <person name="Vollberg T.M."/>
            <person name="Lorand L."/>
            <person name="Jetten A.M."/>
        </authorList>
    </citation>
    <scope>NUCLEOTIDE SEQUENCE [MRNA]</scope>
    <source>
        <strain>New Zealand white</strain>
        <tissue>Trachea</tissue>
    </source>
</reference>
<keyword id="KW-0007">Acetylation</keyword>
<keyword id="KW-0963">Cytoplasm</keyword>
<keyword id="KW-0417">Keratinization</keyword>
<keyword id="KW-1185">Reference proteome</keyword>
<keyword id="KW-0677">Repeat</keyword>
<protein>
    <recommendedName>
        <fullName>Small proline-rich protein 3</fullName>
    </recommendedName>
    <alternativeName>
        <fullName>Cornifin beta</fullName>
    </alternativeName>
</protein>
<feature type="initiator methionine" description="Removed" evidence="1">
    <location>
        <position position="1"/>
    </location>
</feature>
<feature type="chain" id="PRO_0000150005" description="Small proline-rich protein 3">
    <location>
        <begin position="2"/>
        <end position="231"/>
    </location>
</feature>
<feature type="repeat" description="1">
    <location>
        <begin position="55"/>
        <end position="62"/>
    </location>
</feature>
<feature type="repeat" description="2">
    <location>
        <begin position="63"/>
        <end position="70"/>
    </location>
</feature>
<feature type="repeat" description="3">
    <location>
        <begin position="71"/>
        <end position="78"/>
    </location>
</feature>
<feature type="repeat" description="4">
    <location>
        <begin position="79"/>
        <end position="86"/>
    </location>
</feature>
<feature type="repeat" description="5">
    <location>
        <begin position="87"/>
        <end position="94"/>
    </location>
</feature>
<feature type="repeat" description="6">
    <location>
        <begin position="95"/>
        <end position="102"/>
    </location>
</feature>
<feature type="repeat" description="7">
    <location>
        <begin position="103"/>
        <end position="110"/>
    </location>
</feature>
<feature type="repeat" description="8">
    <location>
        <begin position="111"/>
        <end position="118"/>
    </location>
</feature>
<feature type="repeat" description="9">
    <location>
        <begin position="119"/>
        <end position="126"/>
    </location>
</feature>
<feature type="repeat" description="10">
    <location>
        <begin position="127"/>
        <end position="134"/>
    </location>
</feature>
<feature type="repeat" description="11">
    <location>
        <begin position="135"/>
        <end position="142"/>
    </location>
</feature>
<feature type="repeat" description="12">
    <location>
        <begin position="143"/>
        <end position="150"/>
    </location>
</feature>
<feature type="repeat" description="13">
    <location>
        <begin position="151"/>
        <end position="158"/>
    </location>
</feature>
<feature type="repeat" description="14">
    <location>
        <begin position="159"/>
        <end position="166"/>
    </location>
</feature>
<feature type="repeat" description="15">
    <location>
        <begin position="167"/>
        <end position="174"/>
    </location>
</feature>
<feature type="repeat" description="16">
    <location>
        <begin position="175"/>
        <end position="182"/>
    </location>
</feature>
<feature type="repeat" description="17">
    <location>
        <begin position="183"/>
        <end position="190"/>
    </location>
</feature>
<feature type="repeat" description="18">
    <location>
        <begin position="191"/>
        <end position="198"/>
    </location>
</feature>
<feature type="repeat" description="19">
    <location>
        <begin position="199"/>
        <end position="206"/>
    </location>
</feature>
<feature type="repeat" description="20">
    <location>
        <begin position="207"/>
        <end position="214"/>
    </location>
</feature>
<feature type="repeat" description="21">
    <location>
        <begin position="215"/>
        <end position="222"/>
    </location>
</feature>
<feature type="region of interest" description="Disordered" evidence="2">
    <location>
        <begin position="1"/>
        <end position="104"/>
    </location>
</feature>
<feature type="region of interest" description="21 X 8 AA approximate tandem repeats">
    <location>
        <begin position="55"/>
        <end position="222"/>
    </location>
</feature>
<feature type="region of interest" description="Disordered" evidence="2">
    <location>
        <begin position="188"/>
        <end position="231"/>
    </location>
</feature>
<feature type="compositionally biased region" description="Polar residues" evidence="2">
    <location>
        <begin position="80"/>
        <end position="94"/>
    </location>
</feature>
<feature type="compositionally biased region" description="Polar residues" evidence="2">
    <location>
        <begin position="214"/>
        <end position="231"/>
    </location>
</feature>
<feature type="modified residue" description="N-acetylserine" evidence="1">
    <location>
        <position position="2"/>
    </location>
</feature>
<evidence type="ECO:0000250" key="1">
    <source>
        <dbReference type="UniProtKB" id="Q9UBC9"/>
    </source>
</evidence>
<evidence type="ECO:0000256" key="2">
    <source>
        <dbReference type="SAM" id="MobiDB-lite"/>
    </source>
</evidence>
<evidence type="ECO:0000305" key="3"/>
<gene>
    <name type="primary">SPRR3</name>
</gene>
<organism>
    <name type="scientific">Oryctolagus cuniculus</name>
    <name type="common">Rabbit</name>
    <dbReference type="NCBI Taxonomy" id="9986"/>
    <lineage>
        <taxon>Eukaryota</taxon>
        <taxon>Metazoa</taxon>
        <taxon>Chordata</taxon>
        <taxon>Craniata</taxon>
        <taxon>Vertebrata</taxon>
        <taxon>Euteleostomi</taxon>
        <taxon>Mammalia</taxon>
        <taxon>Eutheria</taxon>
        <taxon>Euarchontoglires</taxon>
        <taxon>Glires</taxon>
        <taxon>Lagomorpha</taxon>
        <taxon>Leporidae</taxon>
        <taxon>Oryctolagus</taxon>
    </lineage>
</organism>